<organism>
    <name type="scientific">Oenothera elata subsp. hookeri</name>
    <name type="common">Hooker's evening primrose</name>
    <name type="synonym">Oenothera hookeri</name>
    <dbReference type="NCBI Taxonomy" id="85636"/>
    <lineage>
        <taxon>Eukaryota</taxon>
        <taxon>Viridiplantae</taxon>
        <taxon>Streptophyta</taxon>
        <taxon>Embryophyta</taxon>
        <taxon>Tracheophyta</taxon>
        <taxon>Spermatophyta</taxon>
        <taxon>Magnoliopsida</taxon>
        <taxon>eudicotyledons</taxon>
        <taxon>Gunneridae</taxon>
        <taxon>Pentapetalae</taxon>
        <taxon>rosids</taxon>
        <taxon>malvids</taxon>
        <taxon>Myrtales</taxon>
        <taxon>Onagraceae</taxon>
        <taxon>Onagroideae</taxon>
        <taxon>Onagreae</taxon>
        <taxon>Oenothera</taxon>
    </lineage>
</organism>
<sequence length="83" mass="9387">MSGSTGERSFADIITSIRYWVIHSITIPSLFIAGWLFVSTGLAYDVFGSPRPNEYFTESRQGIPLITGRFDSLEQLDEFSRSF</sequence>
<keyword id="KW-0150">Chloroplast</keyword>
<keyword id="KW-0249">Electron transport</keyword>
<keyword id="KW-0349">Heme</keyword>
<keyword id="KW-0408">Iron</keyword>
<keyword id="KW-0472">Membrane</keyword>
<keyword id="KW-0479">Metal-binding</keyword>
<keyword id="KW-0602">Photosynthesis</keyword>
<keyword id="KW-0604">Photosystem II</keyword>
<keyword id="KW-0934">Plastid</keyword>
<keyword id="KW-0793">Thylakoid</keyword>
<keyword id="KW-0812">Transmembrane</keyword>
<keyword id="KW-1133">Transmembrane helix</keyword>
<keyword id="KW-0813">Transport</keyword>
<protein>
    <recommendedName>
        <fullName evidence="1">Cytochrome b559 subunit alpha</fullName>
    </recommendedName>
    <alternativeName>
        <fullName evidence="1">PSII reaction center subunit V</fullName>
    </alternativeName>
</protein>
<name>PSBE_OENEH</name>
<dbReference type="EMBL" id="X03780">
    <property type="protein sequence ID" value="CAA27410.1"/>
    <property type="molecule type" value="Genomic_DNA"/>
</dbReference>
<dbReference type="EMBL" id="AJ271079">
    <property type="protein sequence ID" value="CAB67174.2"/>
    <property type="molecule type" value="Genomic_DNA"/>
</dbReference>
<dbReference type="RefSeq" id="NP_084709.2">
    <property type="nucleotide sequence ID" value="NC_002693.2"/>
</dbReference>
<dbReference type="SMR" id="Q9MTK5"/>
<dbReference type="GeneID" id="802701"/>
<dbReference type="GO" id="GO:0009535">
    <property type="term" value="C:chloroplast thylakoid membrane"/>
    <property type="evidence" value="ECO:0007669"/>
    <property type="project" value="UniProtKB-SubCell"/>
</dbReference>
<dbReference type="GO" id="GO:0009539">
    <property type="term" value="C:photosystem II reaction center"/>
    <property type="evidence" value="ECO:0007669"/>
    <property type="project" value="InterPro"/>
</dbReference>
<dbReference type="GO" id="GO:0009055">
    <property type="term" value="F:electron transfer activity"/>
    <property type="evidence" value="ECO:0007669"/>
    <property type="project" value="UniProtKB-UniRule"/>
</dbReference>
<dbReference type="GO" id="GO:0020037">
    <property type="term" value="F:heme binding"/>
    <property type="evidence" value="ECO:0007669"/>
    <property type="project" value="InterPro"/>
</dbReference>
<dbReference type="GO" id="GO:0005506">
    <property type="term" value="F:iron ion binding"/>
    <property type="evidence" value="ECO:0007669"/>
    <property type="project" value="UniProtKB-UniRule"/>
</dbReference>
<dbReference type="GO" id="GO:0009767">
    <property type="term" value="P:photosynthetic electron transport chain"/>
    <property type="evidence" value="ECO:0007669"/>
    <property type="project" value="InterPro"/>
</dbReference>
<dbReference type="Gene3D" id="1.20.5.860">
    <property type="entry name" value="Photosystem II cytochrome b559, alpha subunit"/>
    <property type="match status" value="1"/>
</dbReference>
<dbReference type="HAMAP" id="MF_00642">
    <property type="entry name" value="PSII_PsbE"/>
    <property type="match status" value="1"/>
</dbReference>
<dbReference type="InterPro" id="IPR006217">
    <property type="entry name" value="PSII_cyt_b559_asu"/>
</dbReference>
<dbReference type="InterPro" id="IPR037025">
    <property type="entry name" value="PSII_cyt_b559_asu_sf"/>
</dbReference>
<dbReference type="InterPro" id="IPR006216">
    <property type="entry name" value="PSII_cyt_b559_CS"/>
</dbReference>
<dbReference type="InterPro" id="IPR013081">
    <property type="entry name" value="PSII_cyt_b559_N"/>
</dbReference>
<dbReference type="InterPro" id="IPR013082">
    <property type="entry name" value="PSII_cytb559_asu_lum"/>
</dbReference>
<dbReference type="NCBIfam" id="TIGR01332">
    <property type="entry name" value="cyt_b559_alpha"/>
    <property type="match status" value="1"/>
</dbReference>
<dbReference type="PANTHER" id="PTHR33391">
    <property type="entry name" value="CYTOCHROME B559 SUBUNIT BETA-RELATED"/>
    <property type="match status" value="1"/>
</dbReference>
<dbReference type="PANTHER" id="PTHR33391:SF9">
    <property type="entry name" value="CYTOCHROME B559 SUBUNIT BETA-RELATED"/>
    <property type="match status" value="1"/>
</dbReference>
<dbReference type="Pfam" id="PF00283">
    <property type="entry name" value="Cytochrom_B559"/>
    <property type="match status" value="1"/>
</dbReference>
<dbReference type="Pfam" id="PF00284">
    <property type="entry name" value="Cytochrom_B559a"/>
    <property type="match status" value="1"/>
</dbReference>
<dbReference type="PIRSF" id="PIRSF000036">
    <property type="entry name" value="PsbE"/>
    <property type="match status" value="1"/>
</dbReference>
<dbReference type="SUPFAM" id="SSF161045">
    <property type="entry name" value="Cytochrome b559 subunits"/>
    <property type="match status" value="1"/>
</dbReference>
<dbReference type="PROSITE" id="PS00537">
    <property type="entry name" value="CYTOCHROME_B559"/>
    <property type="match status" value="1"/>
</dbReference>
<gene>
    <name evidence="1" type="primary">psbE</name>
</gene>
<proteinExistence type="inferred from homology"/>
<comment type="function">
    <text evidence="1">This b-type cytochrome is tightly associated with the reaction center of photosystem II (PSII). PSII is a light-driven water:plastoquinone oxidoreductase that uses light energy to abstract electrons from H(2)O, generating O(2) and a proton gradient subsequently used for ATP formation. It consists of a core antenna complex that captures photons, and an electron transfer chain that converts photonic excitation into a charge separation.</text>
</comment>
<comment type="cofactor">
    <cofactor evidence="1">
        <name>heme b</name>
        <dbReference type="ChEBI" id="CHEBI:60344"/>
    </cofactor>
    <text evidence="1">With its partner (PsbF) binds heme. PSII binds additional chlorophylls, carotenoids and specific lipids.</text>
</comment>
<comment type="subunit">
    <text evidence="1">Heterodimer of an alpha subunit and a beta subunit. PSII is composed of 1 copy each of membrane proteins PsbA, PsbB, PsbC, PsbD, PsbE, PsbF, PsbH, PsbI, PsbJ, PsbK, PsbL, PsbM, PsbT, PsbX, PsbY, PsbZ, Psb30/Ycf12, at least 3 peripheral proteins of the oxygen-evolving complex and a large number of cofactors. It forms dimeric complexes.</text>
</comment>
<comment type="subcellular location">
    <subcellularLocation>
        <location evidence="1">Plastid</location>
        <location evidence="1">Chloroplast thylakoid membrane</location>
        <topology evidence="1">Single-pass membrane protein</topology>
    </subcellularLocation>
</comment>
<comment type="similarity">
    <text evidence="1">Belongs to the PsbE/PsbF family.</text>
</comment>
<reference key="1">
    <citation type="journal article" date="1986" name="Curr. Genet.">
        <title>Cytochrome b-559 genes from Oenothera hookeri and Nicotiana tabacum show a remarkably high degree of conservation as compared to spinach. The enigma of cytochrome b-559: highly conserved genes and proteins but no known function.</title>
        <authorList>
            <person name="Carrillo N."/>
            <person name="Seyer P."/>
            <person name="Tyagi A."/>
            <person name="Herrmann R.G."/>
        </authorList>
    </citation>
    <scope>NUCLEOTIDE SEQUENCE [GENOMIC DNA]</scope>
</reference>
<reference key="2">
    <citation type="journal article" date="2000" name="Mol. Gen. Genet.">
        <title>Complete nucleotide sequence of the Oenothera elata plastid chromosome, representing plastome I of the five distinguishable Euoenothera plastomes.</title>
        <authorList>
            <person name="Hupfer H."/>
            <person name="Swiatek M."/>
            <person name="Hornung S."/>
            <person name="Herrmann R.G."/>
            <person name="Maier R.M."/>
            <person name="Chiu W.-L."/>
            <person name="Sears B."/>
        </authorList>
    </citation>
    <scope>NUCLEOTIDE SEQUENCE [LARGE SCALE GENOMIC DNA]</scope>
    <source>
        <strain>cv. Johansen</strain>
    </source>
</reference>
<reference key="3">
    <citation type="journal article" date="2008" name="Nucleic Acids Res.">
        <title>The complete nucleotide sequences of the five genetically distinct plastid genomes of Oenothera, subsection Oenothera: I. Sequence evaluation and plastome evolution.</title>
        <authorList>
            <person name="Greiner S."/>
            <person name="Wang X."/>
            <person name="Rauwolf U."/>
            <person name="Silber M.V."/>
            <person name="Mayer K."/>
            <person name="Meurer J."/>
            <person name="Haberer G."/>
            <person name="Herrmann R.G."/>
        </authorList>
    </citation>
    <scope>SEQUENCE REVISION TO 34</scope>
</reference>
<geneLocation type="chloroplast"/>
<evidence type="ECO:0000255" key="1">
    <source>
        <dbReference type="HAMAP-Rule" id="MF_00642"/>
    </source>
</evidence>
<evidence type="ECO:0000305" key="2"/>
<feature type="chain" id="PRO_0000200325" description="Cytochrome b559 subunit alpha">
    <location>
        <begin position="1"/>
        <end position="83"/>
    </location>
</feature>
<feature type="transmembrane region" description="Helical" evidence="1">
    <location>
        <begin position="21"/>
        <end position="35"/>
    </location>
</feature>
<feature type="binding site" description="axial binding residue" evidence="1">
    <location>
        <position position="23"/>
    </location>
    <ligand>
        <name>heme</name>
        <dbReference type="ChEBI" id="CHEBI:30413"/>
        <note>ligand shared with beta subunit</note>
    </ligand>
    <ligandPart>
        <name>Fe</name>
        <dbReference type="ChEBI" id="CHEBI:18248"/>
    </ligandPart>
</feature>
<feature type="sequence conflict" description="In Ref. 1; CAA27410." evidence="2" ref="1">
    <original>E</original>
    <variation>G</variation>
    <location>
        <position position="7"/>
    </location>
</feature>
<accession>Q9MTK5</accession>